<organism>
    <name type="scientific">Pseudomonas syringae pv. tomato (strain ATCC BAA-871 / DC3000)</name>
    <dbReference type="NCBI Taxonomy" id="223283"/>
    <lineage>
        <taxon>Bacteria</taxon>
        <taxon>Pseudomonadati</taxon>
        <taxon>Pseudomonadota</taxon>
        <taxon>Gammaproteobacteria</taxon>
        <taxon>Pseudomonadales</taxon>
        <taxon>Pseudomonadaceae</taxon>
        <taxon>Pseudomonas</taxon>
    </lineage>
</organism>
<name>GLMU_PSESM</name>
<accession>Q87TT6</accession>
<feature type="chain" id="PRO_0000233827" description="Bifunctional protein GlmU">
    <location>
        <begin position="1"/>
        <end position="455"/>
    </location>
</feature>
<feature type="region of interest" description="Pyrophosphorylase" evidence="1">
    <location>
        <begin position="1"/>
        <end position="226"/>
    </location>
</feature>
<feature type="region of interest" description="Linker" evidence="1">
    <location>
        <begin position="227"/>
        <end position="247"/>
    </location>
</feature>
<feature type="region of interest" description="N-acetyltransferase" evidence="1">
    <location>
        <begin position="248"/>
        <end position="455"/>
    </location>
</feature>
<feature type="active site" description="Proton acceptor" evidence="1">
    <location>
        <position position="360"/>
    </location>
</feature>
<feature type="binding site" evidence="1">
    <location>
        <begin position="8"/>
        <end position="11"/>
    </location>
    <ligand>
        <name>UDP-N-acetyl-alpha-D-glucosamine</name>
        <dbReference type="ChEBI" id="CHEBI:57705"/>
    </ligand>
</feature>
<feature type="binding site" evidence="1">
    <location>
        <position position="22"/>
    </location>
    <ligand>
        <name>UDP-N-acetyl-alpha-D-glucosamine</name>
        <dbReference type="ChEBI" id="CHEBI:57705"/>
    </ligand>
</feature>
<feature type="binding site" evidence="1">
    <location>
        <position position="73"/>
    </location>
    <ligand>
        <name>UDP-N-acetyl-alpha-D-glucosamine</name>
        <dbReference type="ChEBI" id="CHEBI:57705"/>
    </ligand>
</feature>
<feature type="binding site" evidence="1">
    <location>
        <begin position="78"/>
        <end position="79"/>
    </location>
    <ligand>
        <name>UDP-N-acetyl-alpha-D-glucosamine</name>
        <dbReference type="ChEBI" id="CHEBI:57705"/>
    </ligand>
</feature>
<feature type="binding site" evidence="1">
    <location>
        <begin position="99"/>
        <end position="101"/>
    </location>
    <ligand>
        <name>UDP-N-acetyl-alpha-D-glucosamine</name>
        <dbReference type="ChEBI" id="CHEBI:57705"/>
    </ligand>
</feature>
<feature type="binding site" evidence="1">
    <location>
        <position position="101"/>
    </location>
    <ligand>
        <name>Mg(2+)</name>
        <dbReference type="ChEBI" id="CHEBI:18420"/>
    </ligand>
</feature>
<feature type="binding site" evidence="1">
    <location>
        <position position="136"/>
    </location>
    <ligand>
        <name>UDP-N-acetyl-alpha-D-glucosamine</name>
        <dbReference type="ChEBI" id="CHEBI:57705"/>
    </ligand>
</feature>
<feature type="binding site" evidence="1">
    <location>
        <position position="151"/>
    </location>
    <ligand>
        <name>UDP-N-acetyl-alpha-D-glucosamine</name>
        <dbReference type="ChEBI" id="CHEBI:57705"/>
    </ligand>
</feature>
<feature type="binding site" evidence="1">
    <location>
        <position position="166"/>
    </location>
    <ligand>
        <name>UDP-N-acetyl-alpha-D-glucosamine</name>
        <dbReference type="ChEBI" id="CHEBI:57705"/>
    </ligand>
</feature>
<feature type="binding site" evidence="1">
    <location>
        <position position="224"/>
    </location>
    <ligand>
        <name>Mg(2+)</name>
        <dbReference type="ChEBI" id="CHEBI:18420"/>
    </ligand>
</feature>
<feature type="binding site" evidence="1">
    <location>
        <position position="224"/>
    </location>
    <ligand>
        <name>UDP-N-acetyl-alpha-D-glucosamine</name>
        <dbReference type="ChEBI" id="CHEBI:57705"/>
    </ligand>
</feature>
<feature type="binding site" evidence="1">
    <location>
        <position position="330"/>
    </location>
    <ligand>
        <name>UDP-N-acetyl-alpha-D-glucosamine</name>
        <dbReference type="ChEBI" id="CHEBI:57705"/>
    </ligand>
</feature>
<feature type="binding site" evidence="1">
    <location>
        <position position="348"/>
    </location>
    <ligand>
        <name>UDP-N-acetyl-alpha-D-glucosamine</name>
        <dbReference type="ChEBI" id="CHEBI:57705"/>
    </ligand>
</feature>
<feature type="binding site" evidence="1">
    <location>
        <position position="363"/>
    </location>
    <ligand>
        <name>UDP-N-acetyl-alpha-D-glucosamine</name>
        <dbReference type="ChEBI" id="CHEBI:57705"/>
    </ligand>
</feature>
<feature type="binding site" evidence="1">
    <location>
        <position position="374"/>
    </location>
    <ligand>
        <name>UDP-N-acetyl-alpha-D-glucosamine</name>
        <dbReference type="ChEBI" id="CHEBI:57705"/>
    </ligand>
</feature>
<feature type="binding site" evidence="1">
    <location>
        <position position="377"/>
    </location>
    <ligand>
        <name>acetyl-CoA</name>
        <dbReference type="ChEBI" id="CHEBI:57288"/>
    </ligand>
</feature>
<feature type="binding site" evidence="1">
    <location>
        <begin position="383"/>
        <end position="384"/>
    </location>
    <ligand>
        <name>acetyl-CoA</name>
        <dbReference type="ChEBI" id="CHEBI:57288"/>
    </ligand>
</feature>
<feature type="binding site" evidence="1">
    <location>
        <position position="402"/>
    </location>
    <ligand>
        <name>acetyl-CoA</name>
        <dbReference type="ChEBI" id="CHEBI:57288"/>
    </ligand>
</feature>
<feature type="binding site" evidence="1">
    <location>
        <position position="420"/>
    </location>
    <ligand>
        <name>acetyl-CoA</name>
        <dbReference type="ChEBI" id="CHEBI:57288"/>
    </ligand>
</feature>
<feature type="binding site" evidence="1">
    <location>
        <position position="437"/>
    </location>
    <ligand>
        <name>acetyl-CoA</name>
        <dbReference type="ChEBI" id="CHEBI:57288"/>
    </ligand>
</feature>
<sequence>MSLDIVILAAGQGTRMRSALPKVLHPVAGNSMLGHVIHSARQLSPVGIHVVIGHGADAVREQLAADDLNFVMQDKQLGTGHAVAQALPALTAETVLILYGDVPLIEVETLQRLLKRVTPEQLGLLTVKLDDPTGYGRIVRDDQHRVCAIVEHKDATDAQKAITEGNTGILAVPASHLQDWLGRLSNNNAQGEYYLTDVIAMAVNDGLVVATEQPHDAMEVQGANDRKQLSELERHYQLREARRLMAAGVTLRDPSRFDVRGEVSVGRDVLIDINVILEGKVIIEDDVVIGPNCVIKDSTLRKGVVVKANSHIDGALLGECSDAGPFARLRPGSVLGAKAHVGNFVELKNANLGEGAKVGHLTYLGDAEVGARTNIGAGTITCNYDGANKHKTTLGADVFIGSNNSLVAPVDILDGATTAAGSTITQNVPAEQLGVARARQRNIEGWKRPVKITKD</sequence>
<proteinExistence type="inferred from homology"/>
<evidence type="ECO:0000255" key="1">
    <source>
        <dbReference type="HAMAP-Rule" id="MF_01631"/>
    </source>
</evidence>
<reference key="1">
    <citation type="journal article" date="2003" name="Proc. Natl. Acad. Sci. U.S.A.">
        <title>The complete genome sequence of the Arabidopsis and tomato pathogen Pseudomonas syringae pv. tomato DC3000.</title>
        <authorList>
            <person name="Buell C.R."/>
            <person name="Joardar V."/>
            <person name="Lindeberg M."/>
            <person name="Selengut J."/>
            <person name="Paulsen I.T."/>
            <person name="Gwinn M.L."/>
            <person name="Dodson R.J."/>
            <person name="DeBoy R.T."/>
            <person name="Durkin A.S."/>
            <person name="Kolonay J.F."/>
            <person name="Madupu R."/>
            <person name="Daugherty S.C."/>
            <person name="Brinkac L.M."/>
            <person name="Beanan M.J."/>
            <person name="Haft D.H."/>
            <person name="Nelson W.C."/>
            <person name="Davidsen T.M."/>
            <person name="Zafar N."/>
            <person name="Zhou L."/>
            <person name="Liu J."/>
            <person name="Yuan Q."/>
            <person name="Khouri H.M."/>
            <person name="Fedorova N.B."/>
            <person name="Tran B."/>
            <person name="Russell D."/>
            <person name="Berry K.J."/>
            <person name="Utterback T.R."/>
            <person name="Van Aken S.E."/>
            <person name="Feldblyum T.V."/>
            <person name="D'Ascenzo M."/>
            <person name="Deng W.-L."/>
            <person name="Ramos A.R."/>
            <person name="Alfano J.R."/>
            <person name="Cartinhour S."/>
            <person name="Chatterjee A.K."/>
            <person name="Delaney T.P."/>
            <person name="Lazarowitz S.G."/>
            <person name="Martin G.B."/>
            <person name="Schneider D.J."/>
            <person name="Tang X."/>
            <person name="Bender C.L."/>
            <person name="White O."/>
            <person name="Fraser C.M."/>
            <person name="Collmer A."/>
        </authorList>
    </citation>
    <scope>NUCLEOTIDE SEQUENCE [LARGE SCALE GENOMIC DNA]</scope>
    <source>
        <strain>ATCC BAA-871 / DC3000</strain>
    </source>
</reference>
<gene>
    <name evidence="1" type="primary">glmU</name>
    <name type="ordered locus">PSPTO_5597</name>
</gene>
<keyword id="KW-0012">Acyltransferase</keyword>
<keyword id="KW-0133">Cell shape</keyword>
<keyword id="KW-0961">Cell wall biogenesis/degradation</keyword>
<keyword id="KW-0963">Cytoplasm</keyword>
<keyword id="KW-0460">Magnesium</keyword>
<keyword id="KW-0479">Metal-binding</keyword>
<keyword id="KW-0511">Multifunctional enzyme</keyword>
<keyword id="KW-0548">Nucleotidyltransferase</keyword>
<keyword id="KW-0573">Peptidoglycan synthesis</keyword>
<keyword id="KW-1185">Reference proteome</keyword>
<keyword id="KW-0677">Repeat</keyword>
<keyword id="KW-0808">Transferase</keyword>
<dbReference type="EC" id="2.7.7.23" evidence="1"/>
<dbReference type="EC" id="2.3.1.157" evidence="1"/>
<dbReference type="EMBL" id="AE016853">
    <property type="protein sequence ID" value="AAO59010.1"/>
    <property type="molecule type" value="Genomic_DNA"/>
</dbReference>
<dbReference type="RefSeq" id="NP_795315.1">
    <property type="nucleotide sequence ID" value="NC_004578.1"/>
</dbReference>
<dbReference type="RefSeq" id="WP_011105590.1">
    <property type="nucleotide sequence ID" value="NC_004578.1"/>
</dbReference>
<dbReference type="SMR" id="Q87TT6"/>
<dbReference type="STRING" id="223283.PSPTO_5597"/>
<dbReference type="GeneID" id="1187289"/>
<dbReference type="KEGG" id="pst:PSPTO_5597"/>
<dbReference type="PATRIC" id="fig|223283.9.peg.5734"/>
<dbReference type="eggNOG" id="COG1207">
    <property type="taxonomic scope" value="Bacteria"/>
</dbReference>
<dbReference type="HOGENOM" id="CLU_029499_15_2_6"/>
<dbReference type="OrthoDB" id="9775031at2"/>
<dbReference type="PhylomeDB" id="Q87TT6"/>
<dbReference type="UniPathway" id="UPA00113">
    <property type="reaction ID" value="UER00532"/>
</dbReference>
<dbReference type="UniPathway" id="UPA00113">
    <property type="reaction ID" value="UER00533"/>
</dbReference>
<dbReference type="UniPathway" id="UPA00973"/>
<dbReference type="Proteomes" id="UP000002515">
    <property type="component" value="Chromosome"/>
</dbReference>
<dbReference type="GO" id="GO:0005737">
    <property type="term" value="C:cytoplasm"/>
    <property type="evidence" value="ECO:0007669"/>
    <property type="project" value="UniProtKB-SubCell"/>
</dbReference>
<dbReference type="GO" id="GO:0016020">
    <property type="term" value="C:membrane"/>
    <property type="evidence" value="ECO:0007669"/>
    <property type="project" value="GOC"/>
</dbReference>
<dbReference type="GO" id="GO:0019134">
    <property type="term" value="F:glucosamine-1-phosphate N-acetyltransferase activity"/>
    <property type="evidence" value="ECO:0007669"/>
    <property type="project" value="UniProtKB-UniRule"/>
</dbReference>
<dbReference type="GO" id="GO:0000287">
    <property type="term" value="F:magnesium ion binding"/>
    <property type="evidence" value="ECO:0007669"/>
    <property type="project" value="UniProtKB-UniRule"/>
</dbReference>
<dbReference type="GO" id="GO:0003977">
    <property type="term" value="F:UDP-N-acetylglucosamine diphosphorylase activity"/>
    <property type="evidence" value="ECO:0007669"/>
    <property type="project" value="UniProtKB-UniRule"/>
</dbReference>
<dbReference type="GO" id="GO:0000902">
    <property type="term" value="P:cell morphogenesis"/>
    <property type="evidence" value="ECO:0007669"/>
    <property type="project" value="UniProtKB-UniRule"/>
</dbReference>
<dbReference type="GO" id="GO:0071555">
    <property type="term" value="P:cell wall organization"/>
    <property type="evidence" value="ECO:0007669"/>
    <property type="project" value="UniProtKB-KW"/>
</dbReference>
<dbReference type="GO" id="GO:0009245">
    <property type="term" value="P:lipid A biosynthetic process"/>
    <property type="evidence" value="ECO:0007669"/>
    <property type="project" value="UniProtKB-UniRule"/>
</dbReference>
<dbReference type="GO" id="GO:0009252">
    <property type="term" value="P:peptidoglycan biosynthetic process"/>
    <property type="evidence" value="ECO:0007669"/>
    <property type="project" value="UniProtKB-UniRule"/>
</dbReference>
<dbReference type="GO" id="GO:0008360">
    <property type="term" value="P:regulation of cell shape"/>
    <property type="evidence" value="ECO:0007669"/>
    <property type="project" value="UniProtKB-KW"/>
</dbReference>
<dbReference type="GO" id="GO:0006048">
    <property type="term" value="P:UDP-N-acetylglucosamine biosynthetic process"/>
    <property type="evidence" value="ECO:0007669"/>
    <property type="project" value="UniProtKB-UniPathway"/>
</dbReference>
<dbReference type="CDD" id="cd02540">
    <property type="entry name" value="GT2_GlmU_N_bac"/>
    <property type="match status" value="1"/>
</dbReference>
<dbReference type="CDD" id="cd03353">
    <property type="entry name" value="LbH_GlmU_C"/>
    <property type="match status" value="1"/>
</dbReference>
<dbReference type="Gene3D" id="2.160.10.10">
    <property type="entry name" value="Hexapeptide repeat proteins"/>
    <property type="match status" value="1"/>
</dbReference>
<dbReference type="Gene3D" id="3.90.550.10">
    <property type="entry name" value="Spore Coat Polysaccharide Biosynthesis Protein SpsA, Chain A"/>
    <property type="match status" value="1"/>
</dbReference>
<dbReference type="HAMAP" id="MF_01631">
    <property type="entry name" value="GlmU"/>
    <property type="match status" value="1"/>
</dbReference>
<dbReference type="InterPro" id="IPR005882">
    <property type="entry name" value="Bifunctional_GlmU"/>
</dbReference>
<dbReference type="InterPro" id="IPR050065">
    <property type="entry name" value="GlmU-like"/>
</dbReference>
<dbReference type="InterPro" id="IPR038009">
    <property type="entry name" value="GlmU_C_LbH"/>
</dbReference>
<dbReference type="InterPro" id="IPR001451">
    <property type="entry name" value="Hexapep"/>
</dbReference>
<dbReference type="InterPro" id="IPR025877">
    <property type="entry name" value="MobA-like_NTP_Trfase"/>
</dbReference>
<dbReference type="InterPro" id="IPR029044">
    <property type="entry name" value="Nucleotide-diphossugar_trans"/>
</dbReference>
<dbReference type="InterPro" id="IPR011004">
    <property type="entry name" value="Trimer_LpxA-like_sf"/>
</dbReference>
<dbReference type="NCBIfam" id="TIGR01173">
    <property type="entry name" value="glmU"/>
    <property type="match status" value="1"/>
</dbReference>
<dbReference type="PANTHER" id="PTHR43584:SF3">
    <property type="entry name" value="BIFUNCTIONAL PROTEIN GLMU"/>
    <property type="match status" value="1"/>
</dbReference>
<dbReference type="PANTHER" id="PTHR43584">
    <property type="entry name" value="NUCLEOTIDYL TRANSFERASE"/>
    <property type="match status" value="1"/>
</dbReference>
<dbReference type="Pfam" id="PF00132">
    <property type="entry name" value="Hexapep"/>
    <property type="match status" value="1"/>
</dbReference>
<dbReference type="Pfam" id="PF14602">
    <property type="entry name" value="Hexapep_2"/>
    <property type="match status" value="1"/>
</dbReference>
<dbReference type="Pfam" id="PF12804">
    <property type="entry name" value="NTP_transf_3"/>
    <property type="match status" value="1"/>
</dbReference>
<dbReference type="SUPFAM" id="SSF53448">
    <property type="entry name" value="Nucleotide-diphospho-sugar transferases"/>
    <property type="match status" value="1"/>
</dbReference>
<dbReference type="SUPFAM" id="SSF51161">
    <property type="entry name" value="Trimeric LpxA-like enzymes"/>
    <property type="match status" value="1"/>
</dbReference>
<comment type="function">
    <text evidence="1">Catalyzes the last two sequential reactions in the de novo biosynthetic pathway for UDP-N-acetylglucosamine (UDP-GlcNAc). The C-terminal domain catalyzes the transfer of acetyl group from acetyl coenzyme A to glucosamine-1-phosphate (GlcN-1-P) to produce N-acetylglucosamine-1-phosphate (GlcNAc-1-P), which is converted into UDP-GlcNAc by the transfer of uridine 5-monophosphate (from uridine 5-triphosphate), a reaction catalyzed by the N-terminal domain.</text>
</comment>
<comment type="catalytic activity">
    <reaction evidence="1">
        <text>alpha-D-glucosamine 1-phosphate + acetyl-CoA = N-acetyl-alpha-D-glucosamine 1-phosphate + CoA + H(+)</text>
        <dbReference type="Rhea" id="RHEA:13725"/>
        <dbReference type="ChEBI" id="CHEBI:15378"/>
        <dbReference type="ChEBI" id="CHEBI:57287"/>
        <dbReference type="ChEBI" id="CHEBI:57288"/>
        <dbReference type="ChEBI" id="CHEBI:57776"/>
        <dbReference type="ChEBI" id="CHEBI:58516"/>
        <dbReference type="EC" id="2.3.1.157"/>
    </reaction>
</comment>
<comment type="catalytic activity">
    <reaction evidence="1">
        <text>N-acetyl-alpha-D-glucosamine 1-phosphate + UTP + H(+) = UDP-N-acetyl-alpha-D-glucosamine + diphosphate</text>
        <dbReference type="Rhea" id="RHEA:13509"/>
        <dbReference type="ChEBI" id="CHEBI:15378"/>
        <dbReference type="ChEBI" id="CHEBI:33019"/>
        <dbReference type="ChEBI" id="CHEBI:46398"/>
        <dbReference type="ChEBI" id="CHEBI:57705"/>
        <dbReference type="ChEBI" id="CHEBI:57776"/>
        <dbReference type="EC" id="2.7.7.23"/>
    </reaction>
</comment>
<comment type="cofactor">
    <cofactor evidence="1">
        <name>Mg(2+)</name>
        <dbReference type="ChEBI" id="CHEBI:18420"/>
    </cofactor>
    <text evidence="1">Binds 1 Mg(2+) ion per subunit.</text>
</comment>
<comment type="pathway">
    <text evidence="1">Nucleotide-sugar biosynthesis; UDP-N-acetyl-alpha-D-glucosamine biosynthesis; N-acetyl-alpha-D-glucosamine 1-phosphate from alpha-D-glucosamine 6-phosphate (route II): step 2/2.</text>
</comment>
<comment type="pathway">
    <text evidence="1">Nucleotide-sugar biosynthesis; UDP-N-acetyl-alpha-D-glucosamine biosynthesis; UDP-N-acetyl-alpha-D-glucosamine from N-acetyl-alpha-D-glucosamine 1-phosphate: step 1/1.</text>
</comment>
<comment type="pathway">
    <text evidence="1">Bacterial outer membrane biogenesis; LPS lipid A biosynthesis.</text>
</comment>
<comment type="subunit">
    <text evidence="1">Homotrimer.</text>
</comment>
<comment type="subcellular location">
    <subcellularLocation>
        <location evidence="1">Cytoplasm</location>
    </subcellularLocation>
</comment>
<comment type="similarity">
    <text evidence="1">In the N-terminal section; belongs to the N-acetylglucosamine-1-phosphate uridyltransferase family.</text>
</comment>
<comment type="similarity">
    <text evidence="1">In the C-terminal section; belongs to the transferase hexapeptide repeat family.</text>
</comment>
<protein>
    <recommendedName>
        <fullName evidence="1">Bifunctional protein GlmU</fullName>
    </recommendedName>
    <domain>
        <recommendedName>
            <fullName evidence="1">UDP-N-acetylglucosamine pyrophosphorylase</fullName>
            <ecNumber evidence="1">2.7.7.23</ecNumber>
        </recommendedName>
        <alternativeName>
            <fullName evidence="1">N-acetylglucosamine-1-phosphate uridyltransferase</fullName>
        </alternativeName>
    </domain>
    <domain>
        <recommendedName>
            <fullName evidence="1">Glucosamine-1-phosphate N-acetyltransferase</fullName>
            <ecNumber evidence="1">2.3.1.157</ecNumber>
        </recommendedName>
    </domain>
</protein>